<evidence type="ECO:0000250" key="1"/>
<evidence type="ECO:0000255" key="2">
    <source>
        <dbReference type="PROSITE-ProRule" id="PRU10001"/>
    </source>
</evidence>
<evidence type="ECO:0000305" key="3"/>
<reference key="1">
    <citation type="journal article" date="1991" name="Proc. Natl. Acad. Sci. U.S.A.">
        <title>Agrobacterium rhizogenes pRi8196 T-DNA: mapping and DNA sequence of functions involved in mannopine synthesis and hairy root differentiation.</title>
        <authorList>
            <person name="Hansen G."/>
            <person name="Larribe M."/>
            <person name="Vaubert D."/>
            <person name="Tempe J."/>
            <person name="Biermann B.J."/>
            <person name="Montoya A.L."/>
            <person name="Chilton M.D."/>
            <person name="Brevet J."/>
        </authorList>
    </citation>
    <scope>NUCLEOTIDE SEQUENCE [GENOMIC DNA]</scope>
</reference>
<protein>
    <recommendedName>
        <fullName>Agropine synthesis reductase</fullName>
        <ecNumber>1.-.-.-</ecNumber>
    </recommendedName>
</protein>
<accession>P50201</accession>
<geneLocation type="plasmid">
    <name>pRi8196</name>
</geneLocation>
<sequence>MPISLEYLGPAQAPASVGDFYFLRHGKTDLNEKEVFVQGEKHWGVQGAGTNIGLNETGKRQAVLAGNVLRKLPISSVVCSPLLRAIQTAVIANIGCLCFEIDDDLKERDFGKHEGGYGPLKMFEENYPDTENTELFSMRVAKALAHAETENTLFVSHGGVLRVVAALLGVELTKEHTDNGRVLHFRRGCPQWTVEIHQSPVILISGPSRGIGKAIAENLIAHGYRMSLGARRVKDLESAFGPQSEWLHYARFDAEDNDTMAAWVTAAVEKFGRIDGLINNAGCGEPVNLEKDIDYKQFHRQWHINCVAPLRMTELCLPYLCETGSGRVVNINSMSGQRVLNPFVGYNMTKHALGGLTKTTQHVGWDRGVRAIDICPGFVATEMSAWTDLISSNDMIQPNDIANLVREAIERPNRAYVPRSEVMCMKESIH</sequence>
<name>MAS12_RHIRH</name>
<comment type="function">
    <text>Reduces deoxy-fructosyl-glutamine to mannopine.</text>
</comment>
<comment type="pathway">
    <text>Opine metabolism; mannopine biosynthesis.</text>
</comment>
<comment type="similarity">
    <text evidence="3">Belongs to the short-chain dehydrogenases/reductases (SDR) family.</text>
</comment>
<keyword id="KW-0560">Oxidoreductase</keyword>
<keyword id="KW-0614">Plasmid</keyword>
<gene>
    <name type="primary">mas1</name>
</gene>
<organism>
    <name type="scientific">Rhizobium rhizogenes</name>
    <name type="common">Agrobacterium rhizogenes</name>
    <dbReference type="NCBI Taxonomy" id="359"/>
    <lineage>
        <taxon>Bacteria</taxon>
        <taxon>Pseudomonadati</taxon>
        <taxon>Pseudomonadota</taxon>
        <taxon>Alphaproteobacteria</taxon>
        <taxon>Hyphomicrobiales</taxon>
        <taxon>Rhizobiaceae</taxon>
        <taxon>Rhizobium/Agrobacterium group</taxon>
        <taxon>Rhizobium</taxon>
    </lineage>
</organism>
<dbReference type="EC" id="1.-.-.-"/>
<dbReference type="EMBL" id="M60490">
    <property type="protein sequence ID" value="AAA22101.1"/>
    <property type="molecule type" value="Genomic_DNA"/>
</dbReference>
<dbReference type="PIR" id="I39727">
    <property type="entry name" value="I39727"/>
</dbReference>
<dbReference type="RefSeq" id="WP_052365245.1">
    <property type="nucleotide sequence ID" value="NZ_SGOI01000012.1"/>
</dbReference>
<dbReference type="SMR" id="P50201"/>
<dbReference type="UniPathway" id="UPA00736"/>
<dbReference type="GO" id="GO:0016491">
    <property type="term" value="F:oxidoreductase activity"/>
    <property type="evidence" value="ECO:0007669"/>
    <property type="project" value="UniProtKB-KW"/>
</dbReference>
<dbReference type="CDD" id="cd08932">
    <property type="entry name" value="HetN_like_SDR_c"/>
    <property type="match status" value="1"/>
</dbReference>
<dbReference type="CDD" id="cd07067">
    <property type="entry name" value="HP_PGM_like"/>
    <property type="match status" value="1"/>
</dbReference>
<dbReference type="Gene3D" id="3.40.50.720">
    <property type="entry name" value="NAD(P)-binding Rossmann-like Domain"/>
    <property type="match status" value="1"/>
</dbReference>
<dbReference type="Gene3D" id="3.40.50.1240">
    <property type="entry name" value="Phosphoglycerate mutase-like"/>
    <property type="match status" value="1"/>
</dbReference>
<dbReference type="InterPro" id="IPR013078">
    <property type="entry name" value="His_Pase_superF_clade-1"/>
</dbReference>
<dbReference type="InterPro" id="IPR029033">
    <property type="entry name" value="His_PPase_superfam"/>
</dbReference>
<dbReference type="InterPro" id="IPR015845">
    <property type="entry name" value="Mas1"/>
</dbReference>
<dbReference type="InterPro" id="IPR036291">
    <property type="entry name" value="NAD(P)-bd_dom_sf"/>
</dbReference>
<dbReference type="InterPro" id="IPR020904">
    <property type="entry name" value="Sc_DH/Rdtase_CS"/>
</dbReference>
<dbReference type="InterPro" id="IPR002347">
    <property type="entry name" value="SDR_fam"/>
</dbReference>
<dbReference type="PANTHER" id="PTHR43975:SF2">
    <property type="entry name" value="EG:BACR7A4.14 PROTEIN-RELATED"/>
    <property type="match status" value="1"/>
</dbReference>
<dbReference type="PANTHER" id="PTHR43975">
    <property type="entry name" value="ZGC:101858"/>
    <property type="match status" value="1"/>
</dbReference>
<dbReference type="Pfam" id="PF00106">
    <property type="entry name" value="adh_short"/>
    <property type="match status" value="1"/>
</dbReference>
<dbReference type="Pfam" id="PF00300">
    <property type="entry name" value="His_Phos_1"/>
    <property type="match status" value="1"/>
</dbReference>
<dbReference type="PIRSF" id="PIRSF036951">
    <property type="entry name" value="Mas1"/>
    <property type="match status" value="1"/>
</dbReference>
<dbReference type="PRINTS" id="PR00081">
    <property type="entry name" value="GDHRDH"/>
</dbReference>
<dbReference type="PRINTS" id="PR00080">
    <property type="entry name" value="SDRFAMILY"/>
</dbReference>
<dbReference type="SMART" id="SM00855">
    <property type="entry name" value="PGAM"/>
    <property type="match status" value="1"/>
</dbReference>
<dbReference type="SUPFAM" id="SSF51735">
    <property type="entry name" value="NAD(P)-binding Rossmann-fold domains"/>
    <property type="match status" value="1"/>
</dbReference>
<dbReference type="SUPFAM" id="SSF53254">
    <property type="entry name" value="Phosphoglycerate mutase-like"/>
    <property type="match status" value="1"/>
</dbReference>
<dbReference type="PROSITE" id="PS00061">
    <property type="entry name" value="ADH_SHORT"/>
    <property type="match status" value="1"/>
</dbReference>
<feature type="chain" id="PRO_0000054723" description="Agropine synthesis reductase">
    <location>
        <begin position="1"/>
        <end position="430"/>
    </location>
</feature>
<feature type="active site" description="Proton acceptor" evidence="2">
    <location>
        <position position="346"/>
    </location>
</feature>
<feature type="binding site" evidence="1">
    <location>
        <begin position="203"/>
        <end position="227"/>
    </location>
    <ligand>
        <name>NAD(+)</name>
        <dbReference type="ChEBI" id="CHEBI:57540"/>
    </ligand>
</feature>
<feature type="binding site" evidence="1">
    <location>
        <position position="333"/>
    </location>
    <ligand>
        <name>substrate</name>
    </ligand>
</feature>
<proteinExistence type="inferred from homology"/>